<geneLocation type="mitochondrion"/>
<reference key="1">
    <citation type="journal article" date="1996" name="J. Mammal. Evol.">
        <title>Relationships among didelphid marsupials based on sequence variation in the mitochondrial cytochrome b gene.</title>
        <authorList>
            <person name="Patton J.L."/>
            <person name="dos Reis Maria S.F."/>
            <person name="da Silva N.F."/>
        </authorList>
    </citation>
    <scope>NUCLEOTIDE SEQUENCE [GENOMIC DNA]</scope>
</reference>
<organism>
    <name type="scientific">Echymipera kalubu</name>
    <name type="common">Kalubu echymipera</name>
    <dbReference type="NCBI Taxonomy" id="42733"/>
    <lineage>
        <taxon>Eukaryota</taxon>
        <taxon>Metazoa</taxon>
        <taxon>Chordata</taxon>
        <taxon>Craniata</taxon>
        <taxon>Vertebrata</taxon>
        <taxon>Euteleostomi</taxon>
        <taxon>Mammalia</taxon>
        <taxon>Metatheria</taxon>
        <taxon>Peramelemorphia</taxon>
        <taxon>Peroryctidae</taxon>
        <taxon>Echymipera</taxon>
    </lineage>
</organism>
<sequence length="381" mass="42846">MTNLRKTHPLMKIVNDAFIDLPAPSNISAWWNFGSLLGICLVIQILTGLFLAMHYTSDTLTAFSSVAHICRDVNYGWLIRNLHANGASMFFMCLFLHVGRGIYYGSYLFKETWNIGVILLLTVMATAFVGYVLPWGQMSFWGATVITNLLSAIPYIGTTLVEWIWGGFSVDKATLTRFFAFHFILPFIITAMVIVHLLFLHETGSNNPSGLNPDSDKIPFHPYYTIKDALGLLMMILILLLLAMFTPDMLGDPDNFSPANPLNTPPHIKPEWYFLFAYAILRSIPNKLGGVLALLASILVLLIIPLLHTSKQRSLMFRPISQTLFWLLTADLFILTWIGGQPVEQPFIIIGPVASIMYFLIILALMPLAGLIENYMLKPKW</sequence>
<name>CYB_ECHKA</name>
<feature type="chain" id="PRO_0000060903" description="Cytochrome b">
    <location>
        <begin position="1"/>
        <end position="381"/>
    </location>
</feature>
<feature type="transmembrane region" description="Helical" evidence="2">
    <location>
        <begin position="33"/>
        <end position="53"/>
    </location>
</feature>
<feature type="transmembrane region" description="Helical" evidence="2">
    <location>
        <begin position="77"/>
        <end position="98"/>
    </location>
</feature>
<feature type="transmembrane region" description="Helical" evidence="2">
    <location>
        <begin position="113"/>
        <end position="133"/>
    </location>
</feature>
<feature type="transmembrane region" description="Helical" evidence="2">
    <location>
        <begin position="178"/>
        <end position="198"/>
    </location>
</feature>
<feature type="transmembrane region" description="Helical" evidence="2">
    <location>
        <begin position="226"/>
        <end position="246"/>
    </location>
</feature>
<feature type="transmembrane region" description="Helical" evidence="2">
    <location>
        <begin position="288"/>
        <end position="308"/>
    </location>
</feature>
<feature type="transmembrane region" description="Helical" evidence="2">
    <location>
        <begin position="320"/>
        <end position="340"/>
    </location>
</feature>
<feature type="transmembrane region" description="Helical" evidence="2">
    <location>
        <begin position="347"/>
        <end position="367"/>
    </location>
</feature>
<feature type="binding site" description="axial binding residue" evidence="2">
    <location>
        <position position="83"/>
    </location>
    <ligand>
        <name>heme b</name>
        <dbReference type="ChEBI" id="CHEBI:60344"/>
        <label>b562</label>
    </ligand>
    <ligandPart>
        <name>Fe</name>
        <dbReference type="ChEBI" id="CHEBI:18248"/>
    </ligandPart>
</feature>
<feature type="binding site" description="axial binding residue" evidence="2">
    <location>
        <position position="97"/>
    </location>
    <ligand>
        <name>heme b</name>
        <dbReference type="ChEBI" id="CHEBI:60344"/>
        <label>b566</label>
    </ligand>
    <ligandPart>
        <name>Fe</name>
        <dbReference type="ChEBI" id="CHEBI:18248"/>
    </ligandPart>
</feature>
<feature type="binding site" description="axial binding residue" evidence="2">
    <location>
        <position position="182"/>
    </location>
    <ligand>
        <name>heme b</name>
        <dbReference type="ChEBI" id="CHEBI:60344"/>
        <label>b562</label>
    </ligand>
    <ligandPart>
        <name>Fe</name>
        <dbReference type="ChEBI" id="CHEBI:18248"/>
    </ligandPart>
</feature>
<feature type="binding site" description="axial binding residue" evidence="2">
    <location>
        <position position="196"/>
    </location>
    <ligand>
        <name>heme b</name>
        <dbReference type="ChEBI" id="CHEBI:60344"/>
        <label>b566</label>
    </ligand>
    <ligandPart>
        <name>Fe</name>
        <dbReference type="ChEBI" id="CHEBI:18248"/>
    </ligandPart>
</feature>
<feature type="binding site" evidence="2">
    <location>
        <position position="201"/>
    </location>
    <ligand>
        <name>a ubiquinone</name>
        <dbReference type="ChEBI" id="CHEBI:16389"/>
    </ligand>
</feature>
<keyword id="KW-0249">Electron transport</keyword>
<keyword id="KW-0349">Heme</keyword>
<keyword id="KW-0408">Iron</keyword>
<keyword id="KW-0472">Membrane</keyword>
<keyword id="KW-0479">Metal-binding</keyword>
<keyword id="KW-0496">Mitochondrion</keyword>
<keyword id="KW-0999">Mitochondrion inner membrane</keyword>
<keyword id="KW-0679">Respiratory chain</keyword>
<keyword id="KW-0812">Transmembrane</keyword>
<keyword id="KW-1133">Transmembrane helix</keyword>
<keyword id="KW-0813">Transport</keyword>
<keyword id="KW-0830">Ubiquinone</keyword>
<protein>
    <recommendedName>
        <fullName>Cytochrome b</fullName>
    </recommendedName>
    <alternativeName>
        <fullName>Complex III subunit 3</fullName>
    </alternativeName>
    <alternativeName>
        <fullName>Complex III subunit III</fullName>
    </alternativeName>
    <alternativeName>
        <fullName>Cytochrome b-c1 complex subunit 3</fullName>
    </alternativeName>
    <alternativeName>
        <fullName>Ubiquinol-cytochrome-c reductase complex cytochrome b subunit</fullName>
    </alternativeName>
</protein>
<accession>Q34473</accession>
<dbReference type="EMBL" id="U34682">
    <property type="protein sequence ID" value="AAA99747.1"/>
    <property type="molecule type" value="Genomic_DNA"/>
</dbReference>
<dbReference type="SMR" id="Q34473"/>
<dbReference type="GO" id="GO:0005743">
    <property type="term" value="C:mitochondrial inner membrane"/>
    <property type="evidence" value="ECO:0007669"/>
    <property type="project" value="UniProtKB-SubCell"/>
</dbReference>
<dbReference type="GO" id="GO:0045275">
    <property type="term" value="C:respiratory chain complex III"/>
    <property type="evidence" value="ECO:0007669"/>
    <property type="project" value="InterPro"/>
</dbReference>
<dbReference type="GO" id="GO:0046872">
    <property type="term" value="F:metal ion binding"/>
    <property type="evidence" value="ECO:0007669"/>
    <property type="project" value="UniProtKB-KW"/>
</dbReference>
<dbReference type="GO" id="GO:0008121">
    <property type="term" value="F:ubiquinol-cytochrome-c reductase activity"/>
    <property type="evidence" value="ECO:0007669"/>
    <property type="project" value="InterPro"/>
</dbReference>
<dbReference type="GO" id="GO:0006122">
    <property type="term" value="P:mitochondrial electron transport, ubiquinol to cytochrome c"/>
    <property type="evidence" value="ECO:0007669"/>
    <property type="project" value="TreeGrafter"/>
</dbReference>
<dbReference type="CDD" id="cd00290">
    <property type="entry name" value="cytochrome_b_C"/>
    <property type="match status" value="1"/>
</dbReference>
<dbReference type="CDD" id="cd00284">
    <property type="entry name" value="Cytochrome_b_N"/>
    <property type="match status" value="1"/>
</dbReference>
<dbReference type="FunFam" id="1.20.810.10:FF:000002">
    <property type="entry name" value="Cytochrome b"/>
    <property type="match status" value="1"/>
</dbReference>
<dbReference type="Gene3D" id="1.20.810.10">
    <property type="entry name" value="Cytochrome Bc1 Complex, Chain C"/>
    <property type="match status" value="1"/>
</dbReference>
<dbReference type="InterPro" id="IPR005798">
    <property type="entry name" value="Cyt_b/b6_C"/>
</dbReference>
<dbReference type="InterPro" id="IPR036150">
    <property type="entry name" value="Cyt_b/b6_C_sf"/>
</dbReference>
<dbReference type="InterPro" id="IPR005797">
    <property type="entry name" value="Cyt_b/b6_N"/>
</dbReference>
<dbReference type="InterPro" id="IPR027387">
    <property type="entry name" value="Cytb/b6-like_sf"/>
</dbReference>
<dbReference type="InterPro" id="IPR030689">
    <property type="entry name" value="Cytochrome_b"/>
</dbReference>
<dbReference type="InterPro" id="IPR048260">
    <property type="entry name" value="Cytochrome_b_C_euk/bac"/>
</dbReference>
<dbReference type="InterPro" id="IPR048259">
    <property type="entry name" value="Cytochrome_b_N_euk/bac"/>
</dbReference>
<dbReference type="InterPro" id="IPR016174">
    <property type="entry name" value="Di-haem_cyt_TM"/>
</dbReference>
<dbReference type="PANTHER" id="PTHR19271">
    <property type="entry name" value="CYTOCHROME B"/>
    <property type="match status" value="1"/>
</dbReference>
<dbReference type="PANTHER" id="PTHR19271:SF16">
    <property type="entry name" value="CYTOCHROME B"/>
    <property type="match status" value="1"/>
</dbReference>
<dbReference type="Pfam" id="PF00032">
    <property type="entry name" value="Cytochrom_B_C"/>
    <property type="match status" value="1"/>
</dbReference>
<dbReference type="Pfam" id="PF00033">
    <property type="entry name" value="Cytochrome_B"/>
    <property type="match status" value="1"/>
</dbReference>
<dbReference type="PIRSF" id="PIRSF038885">
    <property type="entry name" value="COB"/>
    <property type="match status" value="1"/>
</dbReference>
<dbReference type="SUPFAM" id="SSF81648">
    <property type="entry name" value="a domain/subunit of cytochrome bc1 complex (Ubiquinol-cytochrome c reductase)"/>
    <property type="match status" value="1"/>
</dbReference>
<dbReference type="SUPFAM" id="SSF81342">
    <property type="entry name" value="Transmembrane di-heme cytochromes"/>
    <property type="match status" value="1"/>
</dbReference>
<dbReference type="PROSITE" id="PS51003">
    <property type="entry name" value="CYTB_CTER"/>
    <property type="match status" value="1"/>
</dbReference>
<dbReference type="PROSITE" id="PS51002">
    <property type="entry name" value="CYTB_NTER"/>
    <property type="match status" value="1"/>
</dbReference>
<gene>
    <name type="primary">MT-CYB</name>
    <name type="synonym">COB</name>
    <name type="synonym">CYTB</name>
    <name type="synonym">MTCYB</name>
</gene>
<comment type="function">
    <text evidence="2">Component of the ubiquinol-cytochrome c reductase complex (complex III or cytochrome b-c1 complex) that is part of the mitochondrial respiratory chain. The b-c1 complex mediates electron transfer from ubiquinol to cytochrome c. Contributes to the generation of a proton gradient across the mitochondrial membrane that is then used for ATP synthesis.</text>
</comment>
<comment type="cofactor">
    <cofactor evidence="2">
        <name>heme b</name>
        <dbReference type="ChEBI" id="CHEBI:60344"/>
    </cofactor>
    <text evidence="2">Binds 2 heme b groups non-covalently.</text>
</comment>
<comment type="subunit">
    <text evidence="2">The cytochrome bc1 complex contains 11 subunits: 3 respiratory subunits (MT-CYB, CYC1 and UQCRFS1), 2 core proteins (UQCRC1 and UQCRC2) and 6 low-molecular weight proteins (UQCRH/QCR6, UQCRB/QCR7, UQCRQ/QCR8, UQCR10/QCR9, UQCR11/QCR10 and a cleavage product of UQCRFS1). This cytochrome bc1 complex then forms a dimer.</text>
</comment>
<comment type="subcellular location">
    <subcellularLocation>
        <location evidence="2">Mitochondrion inner membrane</location>
        <topology evidence="2">Multi-pass membrane protein</topology>
    </subcellularLocation>
</comment>
<comment type="miscellaneous">
    <text evidence="1">Heme 1 (or BL or b562) is low-potential and absorbs at about 562 nm, and heme 2 (or BH or b566) is high-potential and absorbs at about 566 nm.</text>
</comment>
<comment type="similarity">
    <text evidence="3 4">Belongs to the cytochrome b family.</text>
</comment>
<comment type="caution">
    <text evidence="2">The full-length protein contains only eight transmembrane helices, not nine as predicted by bioinformatics tools.</text>
</comment>
<proteinExistence type="inferred from homology"/>
<evidence type="ECO:0000250" key="1"/>
<evidence type="ECO:0000250" key="2">
    <source>
        <dbReference type="UniProtKB" id="P00157"/>
    </source>
</evidence>
<evidence type="ECO:0000255" key="3">
    <source>
        <dbReference type="PROSITE-ProRule" id="PRU00967"/>
    </source>
</evidence>
<evidence type="ECO:0000255" key="4">
    <source>
        <dbReference type="PROSITE-ProRule" id="PRU00968"/>
    </source>
</evidence>